<protein>
    <recommendedName>
        <fullName>Probable long-chain-alcohol O-fatty-acyltransferase 9</fullName>
        <ecNumber>2.3.1.75</ecNumber>
    </recommendedName>
    <alternativeName>
        <fullName>Wax synthase 9</fullName>
    </alternativeName>
</protein>
<reference key="1">
    <citation type="journal article" date="2000" name="Nature">
        <title>Sequence and analysis of chromosome 1 of the plant Arabidopsis thaliana.</title>
        <authorList>
            <person name="Theologis A."/>
            <person name="Ecker J.R."/>
            <person name="Palm C.J."/>
            <person name="Federspiel N.A."/>
            <person name="Kaul S."/>
            <person name="White O."/>
            <person name="Alonso J."/>
            <person name="Altafi H."/>
            <person name="Araujo R."/>
            <person name="Bowman C.L."/>
            <person name="Brooks S.Y."/>
            <person name="Buehler E."/>
            <person name="Chan A."/>
            <person name="Chao Q."/>
            <person name="Chen H."/>
            <person name="Cheuk R.F."/>
            <person name="Chin C.W."/>
            <person name="Chung M.K."/>
            <person name="Conn L."/>
            <person name="Conway A.B."/>
            <person name="Conway A.R."/>
            <person name="Creasy T.H."/>
            <person name="Dewar K."/>
            <person name="Dunn P."/>
            <person name="Etgu P."/>
            <person name="Feldblyum T.V."/>
            <person name="Feng J.-D."/>
            <person name="Fong B."/>
            <person name="Fujii C.Y."/>
            <person name="Gill J.E."/>
            <person name="Goldsmith A.D."/>
            <person name="Haas B."/>
            <person name="Hansen N.F."/>
            <person name="Hughes B."/>
            <person name="Huizar L."/>
            <person name="Hunter J.L."/>
            <person name="Jenkins J."/>
            <person name="Johnson-Hopson C."/>
            <person name="Khan S."/>
            <person name="Khaykin E."/>
            <person name="Kim C.J."/>
            <person name="Koo H.L."/>
            <person name="Kremenetskaia I."/>
            <person name="Kurtz D.B."/>
            <person name="Kwan A."/>
            <person name="Lam B."/>
            <person name="Langin-Hooper S."/>
            <person name="Lee A."/>
            <person name="Lee J.M."/>
            <person name="Lenz C.A."/>
            <person name="Li J.H."/>
            <person name="Li Y.-P."/>
            <person name="Lin X."/>
            <person name="Liu S.X."/>
            <person name="Liu Z.A."/>
            <person name="Luros J.S."/>
            <person name="Maiti R."/>
            <person name="Marziali A."/>
            <person name="Militscher J."/>
            <person name="Miranda M."/>
            <person name="Nguyen M."/>
            <person name="Nierman W.C."/>
            <person name="Osborne B.I."/>
            <person name="Pai G."/>
            <person name="Peterson J."/>
            <person name="Pham P.K."/>
            <person name="Rizzo M."/>
            <person name="Rooney T."/>
            <person name="Rowley D."/>
            <person name="Sakano H."/>
            <person name="Salzberg S.L."/>
            <person name="Schwartz J.R."/>
            <person name="Shinn P."/>
            <person name="Southwick A.M."/>
            <person name="Sun H."/>
            <person name="Tallon L.J."/>
            <person name="Tambunga G."/>
            <person name="Toriumi M.J."/>
            <person name="Town C.D."/>
            <person name="Utterback T."/>
            <person name="Van Aken S."/>
            <person name="Vaysberg M."/>
            <person name="Vysotskaia V.S."/>
            <person name="Walker M."/>
            <person name="Wu D."/>
            <person name="Yu G."/>
            <person name="Fraser C.M."/>
            <person name="Venter J.C."/>
            <person name="Davis R.W."/>
        </authorList>
    </citation>
    <scope>NUCLEOTIDE SEQUENCE [LARGE SCALE GENOMIC DNA]</scope>
    <source>
        <strain>cv. Columbia</strain>
    </source>
</reference>
<reference key="2">
    <citation type="journal article" date="2017" name="Plant J.">
        <title>Araport11: a complete reannotation of the Arabidopsis thaliana reference genome.</title>
        <authorList>
            <person name="Cheng C.Y."/>
            <person name="Krishnakumar V."/>
            <person name="Chan A.P."/>
            <person name="Thibaud-Nissen F."/>
            <person name="Schobel S."/>
            <person name="Town C.D."/>
        </authorList>
    </citation>
    <scope>GENOME REANNOTATION</scope>
    <source>
        <strain>cv. Columbia</strain>
    </source>
</reference>
<reference key="3">
    <citation type="submission" date="2005-05" db="EMBL/GenBank/DDBJ databases">
        <authorList>
            <person name="Underwood B.A."/>
            <person name="Xiao Y.-L."/>
            <person name="Moskal W.A. Jr."/>
            <person name="Monaghan E.L."/>
            <person name="Wang W."/>
            <person name="Redman J.C."/>
            <person name="Wu H.C."/>
            <person name="Utterback T."/>
            <person name="Town C.D."/>
        </authorList>
    </citation>
    <scope>NUCLEOTIDE SEQUENCE [LARGE SCALE MRNA]</scope>
    <source>
        <strain>cv. Columbia</strain>
    </source>
</reference>
<dbReference type="EC" id="2.3.1.75"/>
<dbReference type="EMBL" id="AC023279">
    <property type="protein sequence ID" value="AAF79268.1"/>
    <property type="status" value="ALT_SEQ"/>
    <property type="molecule type" value="Genomic_DNA"/>
</dbReference>
<dbReference type="EMBL" id="CP002684">
    <property type="protein sequence ID" value="AEE31720.1"/>
    <property type="molecule type" value="Genomic_DNA"/>
</dbReference>
<dbReference type="EMBL" id="DQ056479">
    <property type="protein sequence ID" value="AAY78636.1"/>
    <property type="molecule type" value="mRNA"/>
</dbReference>
<dbReference type="RefSeq" id="NP_174709.1">
    <property type="nucleotide sequence ID" value="NM_103172.1"/>
</dbReference>
<dbReference type="STRING" id="3702.Q4PT07"/>
<dbReference type="PaxDb" id="3702-AT1G34500.1"/>
<dbReference type="EnsemblPlants" id="AT1G34500.1">
    <property type="protein sequence ID" value="AT1G34500.1"/>
    <property type="gene ID" value="AT1G34500"/>
</dbReference>
<dbReference type="GeneID" id="840352"/>
<dbReference type="Gramene" id="AT1G34500.1">
    <property type="protein sequence ID" value="AT1G34500.1"/>
    <property type="gene ID" value="AT1G34500"/>
</dbReference>
<dbReference type="KEGG" id="ath:AT1G34500"/>
<dbReference type="Araport" id="AT1G34500"/>
<dbReference type="TAIR" id="AT1G34500"/>
<dbReference type="HOGENOM" id="CLU_045902_0_0_1"/>
<dbReference type="InParanoid" id="Q4PT07"/>
<dbReference type="OMA" id="CFYIPSK"/>
<dbReference type="PhylomeDB" id="Q4PT07"/>
<dbReference type="BioCyc" id="ARA:AT1G34500-MONOMER"/>
<dbReference type="BRENDA" id="2.3.1.75">
    <property type="organism ID" value="399"/>
</dbReference>
<dbReference type="PRO" id="PR:Q4PT07"/>
<dbReference type="Proteomes" id="UP000006548">
    <property type="component" value="Chromosome 1"/>
</dbReference>
<dbReference type="ExpressionAtlas" id="Q4PT07">
    <property type="expression patterns" value="baseline and differential"/>
</dbReference>
<dbReference type="GO" id="GO:0016020">
    <property type="term" value="C:membrane"/>
    <property type="evidence" value="ECO:0007669"/>
    <property type="project" value="UniProtKB-SubCell"/>
</dbReference>
<dbReference type="GO" id="GO:0047196">
    <property type="term" value="F:long-chain-alcohol O-fatty-acyltransferase activity"/>
    <property type="evidence" value="ECO:0007669"/>
    <property type="project" value="UniProtKB-EC"/>
</dbReference>
<dbReference type="GO" id="GO:0006629">
    <property type="term" value="P:lipid metabolic process"/>
    <property type="evidence" value="ECO:0007669"/>
    <property type="project" value="UniProtKB-KW"/>
</dbReference>
<dbReference type="InterPro" id="IPR044851">
    <property type="entry name" value="Wax_synthase"/>
</dbReference>
<dbReference type="InterPro" id="IPR032805">
    <property type="entry name" value="Wax_synthase_dom"/>
</dbReference>
<dbReference type="InterPro" id="IPR017088">
    <property type="entry name" value="Wax_synthase_Magnoliopsida"/>
</dbReference>
<dbReference type="PANTHER" id="PTHR31595:SF41">
    <property type="entry name" value="LONG-CHAIN-ALCOHOL O-FATTY-ACYLTRANSFERASE 10-RELATED"/>
    <property type="match status" value="1"/>
</dbReference>
<dbReference type="PANTHER" id="PTHR31595">
    <property type="entry name" value="LONG-CHAIN-ALCOHOL O-FATTY-ACYLTRANSFERASE 3-RELATED"/>
    <property type="match status" value="1"/>
</dbReference>
<dbReference type="Pfam" id="PF13813">
    <property type="entry name" value="MBOAT_2"/>
    <property type="match status" value="1"/>
</dbReference>
<dbReference type="PIRSF" id="PIRSF037006">
    <property type="entry name" value="Wax_synthase"/>
    <property type="match status" value="1"/>
</dbReference>
<gene>
    <name type="ordered locus">At1g34500</name>
    <name type="ORF">F12K21.19</name>
</gene>
<keyword id="KW-0012">Acyltransferase</keyword>
<keyword id="KW-0444">Lipid biosynthesis</keyword>
<keyword id="KW-0443">Lipid metabolism</keyword>
<keyword id="KW-0472">Membrane</keyword>
<keyword id="KW-1185">Reference proteome</keyword>
<keyword id="KW-0808">Transferase</keyword>
<keyword id="KW-0812">Transmembrane</keyword>
<keyword id="KW-1133">Transmembrane helix</keyword>
<sequence>MEEELKNFIIVWISAIISVSYCYYISANIKTGVLRLFSVLPICGLFFVLPLFFSSVHFSSSTAFYLSEMASLKLILFAFDQGPLFPVAPNLIQFVCFTCFPIKLQRNPKSQPSQNHFHKRAFAIKIMIFGVVLHVYNYSHFLPQTVLLSLCFLHLYVELEILLGPLKVLLSMALGCDLEPQFNKPYLATSLQDFWGRRWNLMVSSVLRSGIYNPVRCACQRPMNSGWARFMGYLVTFLVSGLFHELVYFYITRETPTWEVTLFFVLNGVCTGTEVAVKRTAFLQRWWPVRSSVSRLLTMGFVVVTGGLLFFPLFIRSGMMERRANETLFFLDFVKRKFSIF</sequence>
<comment type="function">
    <text evidence="1">Catalyzes the final step in the synthesis of long-chain linear esters (waxes).</text>
</comment>
<comment type="catalytic activity">
    <reaction>
        <text>a long chain fatty alcohol + a fatty acyl-CoA = a wax ester + CoA</text>
        <dbReference type="Rhea" id="RHEA:38443"/>
        <dbReference type="ChEBI" id="CHEBI:10036"/>
        <dbReference type="ChEBI" id="CHEBI:17135"/>
        <dbReference type="ChEBI" id="CHEBI:57287"/>
        <dbReference type="ChEBI" id="CHEBI:77636"/>
        <dbReference type="EC" id="2.3.1.75"/>
    </reaction>
</comment>
<comment type="subcellular location">
    <subcellularLocation>
        <location evidence="3">Membrane</location>
        <topology evidence="3">Multi-pass membrane protein</topology>
    </subcellularLocation>
</comment>
<comment type="similarity">
    <text evidence="3">Belongs to the wax synthase family.</text>
</comment>
<comment type="sequence caution" evidence="3">
    <conflict type="erroneous gene model prediction">
        <sequence resource="EMBL-CDS" id="AAF79268"/>
    </conflict>
    <text>The predicted gene has been split into 2 genes: At1g34490 and At1g34500.</text>
</comment>
<name>WAXS9_ARATH</name>
<feature type="chain" id="PRO_0000380685" description="Probable long-chain-alcohol O-fatty-acyltransferase 9">
    <location>
        <begin position="1"/>
        <end position="341"/>
    </location>
</feature>
<feature type="transmembrane region" description="Helical" evidence="2">
    <location>
        <begin position="9"/>
        <end position="29"/>
    </location>
</feature>
<feature type="transmembrane region" description="Helical" evidence="2">
    <location>
        <begin position="36"/>
        <end position="56"/>
    </location>
</feature>
<feature type="transmembrane region" description="Helical" evidence="2">
    <location>
        <begin position="82"/>
        <end position="102"/>
    </location>
</feature>
<feature type="transmembrane region" description="Helical" evidence="2">
    <location>
        <begin position="122"/>
        <end position="142"/>
    </location>
</feature>
<feature type="transmembrane region" description="Helical" evidence="2">
    <location>
        <begin position="146"/>
        <end position="166"/>
    </location>
</feature>
<feature type="transmembrane region" description="Helical" evidence="2">
    <location>
        <begin position="231"/>
        <end position="251"/>
    </location>
</feature>
<feature type="transmembrane region" description="Helical" evidence="2">
    <location>
        <begin position="295"/>
        <end position="315"/>
    </location>
</feature>
<proteinExistence type="evidence at transcript level"/>
<evidence type="ECO:0000250" key="1"/>
<evidence type="ECO:0000255" key="2"/>
<evidence type="ECO:0000305" key="3"/>
<accession>Q4PT07</accession>
<accession>Q9LNK9</accession>
<organism>
    <name type="scientific">Arabidopsis thaliana</name>
    <name type="common">Mouse-ear cress</name>
    <dbReference type="NCBI Taxonomy" id="3702"/>
    <lineage>
        <taxon>Eukaryota</taxon>
        <taxon>Viridiplantae</taxon>
        <taxon>Streptophyta</taxon>
        <taxon>Embryophyta</taxon>
        <taxon>Tracheophyta</taxon>
        <taxon>Spermatophyta</taxon>
        <taxon>Magnoliopsida</taxon>
        <taxon>eudicotyledons</taxon>
        <taxon>Gunneridae</taxon>
        <taxon>Pentapetalae</taxon>
        <taxon>rosids</taxon>
        <taxon>malvids</taxon>
        <taxon>Brassicales</taxon>
        <taxon>Brassicaceae</taxon>
        <taxon>Camelineae</taxon>
        <taxon>Arabidopsis</taxon>
    </lineage>
</organism>